<protein>
    <recommendedName>
        <fullName evidence="1">3-methyl-2-oxobutanoate hydroxymethyltransferase</fullName>
        <ecNumber evidence="1">2.1.2.11</ecNumber>
    </recommendedName>
    <alternativeName>
        <fullName evidence="1">Ketopantoate hydroxymethyltransferase</fullName>
        <shortName evidence="1">KPHMT</shortName>
    </alternativeName>
</protein>
<gene>
    <name evidence="1" type="primary">panB</name>
    <name type="ordered locus">Dde_1500</name>
</gene>
<sequence length="289" mass="30854">MSTHAETRAITAADIRAAKNTRRLAMLTAYDYPTASIADEGGMDMLLVGDSLAMVVLGHEDTLSVTLDEMIHHCRAVTRGASRALVVGDLPFMTYEQGPDQAMHSAARLFREGGVRAVKLEGGKEVAPQVEALVKAGIPVMGHIGLTPQRVAALGGFKVQGRSAAAARSLAEDARILEDAGCFALVLEAIPAPVAAHITRTSGIPTIGIGAGAQCDGQVLVVHDMLGLFDRFTPKFVKRYAELRGHAVKAVQQYGDEVRQGEFPAAQHSFGMPEDEQRRWEENVSGADD</sequence>
<dbReference type="EC" id="2.1.2.11" evidence="1"/>
<dbReference type="EMBL" id="CP000112">
    <property type="protein sequence ID" value="ABB38299.1"/>
    <property type="molecule type" value="Genomic_DNA"/>
</dbReference>
<dbReference type="RefSeq" id="WP_011367465.1">
    <property type="nucleotide sequence ID" value="NC_007519.1"/>
</dbReference>
<dbReference type="SMR" id="Q311U7"/>
<dbReference type="STRING" id="207559.Dde_1500"/>
<dbReference type="KEGG" id="dde:Dde_1500"/>
<dbReference type="eggNOG" id="COG0413">
    <property type="taxonomic scope" value="Bacteria"/>
</dbReference>
<dbReference type="HOGENOM" id="CLU_036645_1_0_7"/>
<dbReference type="UniPathway" id="UPA00028">
    <property type="reaction ID" value="UER00003"/>
</dbReference>
<dbReference type="Proteomes" id="UP000002710">
    <property type="component" value="Chromosome"/>
</dbReference>
<dbReference type="GO" id="GO:0005737">
    <property type="term" value="C:cytoplasm"/>
    <property type="evidence" value="ECO:0007669"/>
    <property type="project" value="UniProtKB-SubCell"/>
</dbReference>
<dbReference type="GO" id="GO:0003864">
    <property type="term" value="F:3-methyl-2-oxobutanoate hydroxymethyltransferase activity"/>
    <property type="evidence" value="ECO:0007669"/>
    <property type="project" value="UniProtKB-UniRule"/>
</dbReference>
<dbReference type="GO" id="GO:0000287">
    <property type="term" value="F:magnesium ion binding"/>
    <property type="evidence" value="ECO:0007669"/>
    <property type="project" value="TreeGrafter"/>
</dbReference>
<dbReference type="GO" id="GO:0015940">
    <property type="term" value="P:pantothenate biosynthetic process"/>
    <property type="evidence" value="ECO:0007669"/>
    <property type="project" value="UniProtKB-UniRule"/>
</dbReference>
<dbReference type="CDD" id="cd06557">
    <property type="entry name" value="KPHMT-like"/>
    <property type="match status" value="1"/>
</dbReference>
<dbReference type="FunFam" id="3.20.20.60:FF:000003">
    <property type="entry name" value="3-methyl-2-oxobutanoate hydroxymethyltransferase"/>
    <property type="match status" value="1"/>
</dbReference>
<dbReference type="Gene3D" id="3.20.20.60">
    <property type="entry name" value="Phosphoenolpyruvate-binding domains"/>
    <property type="match status" value="1"/>
</dbReference>
<dbReference type="HAMAP" id="MF_00156">
    <property type="entry name" value="PanB"/>
    <property type="match status" value="1"/>
</dbReference>
<dbReference type="InterPro" id="IPR003700">
    <property type="entry name" value="Pantoate_hydroxy_MeTrfase"/>
</dbReference>
<dbReference type="InterPro" id="IPR015813">
    <property type="entry name" value="Pyrv/PenolPyrv_kinase-like_dom"/>
</dbReference>
<dbReference type="InterPro" id="IPR040442">
    <property type="entry name" value="Pyrv_kinase-like_dom_sf"/>
</dbReference>
<dbReference type="NCBIfam" id="TIGR00222">
    <property type="entry name" value="panB"/>
    <property type="match status" value="1"/>
</dbReference>
<dbReference type="NCBIfam" id="NF001452">
    <property type="entry name" value="PRK00311.1"/>
    <property type="match status" value="1"/>
</dbReference>
<dbReference type="PANTHER" id="PTHR20881">
    <property type="entry name" value="3-METHYL-2-OXOBUTANOATE HYDROXYMETHYLTRANSFERASE"/>
    <property type="match status" value="1"/>
</dbReference>
<dbReference type="PANTHER" id="PTHR20881:SF0">
    <property type="entry name" value="3-METHYL-2-OXOBUTANOATE HYDROXYMETHYLTRANSFERASE"/>
    <property type="match status" value="1"/>
</dbReference>
<dbReference type="Pfam" id="PF02548">
    <property type="entry name" value="Pantoate_transf"/>
    <property type="match status" value="1"/>
</dbReference>
<dbReference type="PIRSF" id="PIRSF000388">
    <property type="entry name" value="Pantoate_hydroxy_MeTrfase"/>
    <property type="match status" value="1"/>
</dbReference>
<dbReference type="SUPFAM" id="SSF51621">
    <property type="entry name" value="Phosphoenolpyruvate/pyruvate domain"/>
    <property type="match status" value="1"/>
</dbReference>
<feature type="chain" id="PRO_0000297260" description="3-methyl-2-oxobutanoate hydroxymethyltransferase">
    <location>
        <begin position="1"/>
        <end position="289"/>
    </location>
</feature>
<feature type="region of interest" description="Disordered" evidence="2">
    <location>
        <begin position="266"/>
        <end position="289"/>
    </location>
</feature>
<feature type="active site" description="Proton acceptor" evidence="1">
    <location>
        <position position="188"/>
    </location>
</feature>
<feature type="binding site" evidence="1">
    <location>
        <begin position="50"/>
        <end position="51"/>
    </location>
    <ligand>
        <name>3-methyl-2-oxobutanoate</name>
        <dbReference type="ChEBI" id="CHEBI:11851"/>
    </ligand>
</feature>
<feature type="binding site" evidence="1">
    <location>
        <position position="50"/>
    </location>
    <ligand>
        <name>Mg(2+)</name>
        <dbReference type="ChEBI" id="CHEBI:18420"/>
    </ligand>
</feature>
<feature type="binding site" evidence="1">
    <location>
        <position position="89"/>
    </location>
    <ligand>
        <name>3-methyl-2-oxobutanoate</name>
        <dbReference type="ChEBI" id="CHEBI:11851"/>
    </ligand>
</feature>
<feature type="binding site" evidence="1">
    <location>
        <position position="89"/>
    </location>
    <ligand>
        <name>Mg(2+)</name>
        <dbReference type="ChEBI" id="CHEBI:18420"/>
    </ligand>
</feature>
<feature type="binding site" evidence="1">
    <location>
        <position position="119"/>
    </location>
    <ligand>
        <name>3-methyl-2-oxobutanoate</name>
        <dbReference type="ChEBI" id="CHEBI:11851"/>
    </ligand>
</feature>
<feature type="binding site" evidence="1">
    <location>
        <position position="121"/>
    </location>
    <ligand>
        <name>Mg(2+)</name>
        <dbReference type="ChEBI" id="CHEBI:18420"/>
    </ligand>
</feature>
<proteinExistence type="inferred from homology"/>
<accession>Q311U7</accession>
<comment type="function">
    <text evidence="1">Catalyzes the reversible reaction in which hydroxymethyl group from 5,10-methylenetetrahydrofolate is transferred onto alpha-ketoisovalerate to form ketopantoate.</text>
</comment>
<comment type="catalytic activity">
    <reaction evidence="1">
        <text>3-methyl-2-oxobutanoate + (6R)-5,10-methylene-5,6,7,8-tetrahydrofolate + H2O = 2-dehydropantoate + (6S)-5,6,7,8-tetrahydrofolate</text>
        <dbReference type="Rhea" id="RHEA:11824"/>
        <dbReference type="ChEBI" id="CHEBI:11561"/>
        <dbReference type="ChEBI" id="CHEBI:11851"/>
        <dbReference type="ChEBI" id="CHEBI:15377"/>
        <dbReference type="ChEBI" id="CHEBI:15636"/>
        <dbReference type="ChEBI" id="CHEBI:57453"/>
        <dbReference type="EC" id="2.1.2.11"/>
    </reaction>
</comment>
<comment type="cofactor">
    <cofactor evidence="1">
        <name>Mg(2+)</name>
        <dbReference type="ChEBI" id="CHEBI:18420"/>
    </cofactor>
    <text evidence="1">Binds 1 Mg(2+) ion per subunit.</text>
</comment>
<comment type="pathway">
    <text evidence="1">Cofactor biosynthesis; (R)-pantothenate biosynthesis; (R)-pantoate from 3-methyl-2-oxobutanoate: step 1/2.</text>
</comment>
<comment type="subunit">
    <text evidence="1">Homodecamer; pentamer of dimers.</text>
</comment>
<comment type="subcellular location">
    <subcellularLocation>
        <location evidence="1">Cytoplasm</location>
    </subcellularLocation>
</comment>
<comment type="similarity">
    <text evidence="1">Belongs to the PanB family.</text>
</comment>
<organism>
    <name type="scientific">Oleidesulfovibrio alaskensis (strain ATCC BAA-1058 / DSM 17464 / G20)</name>
    <name type="common">Desulfovibrio alaskensis</name>
    <dbReference type="NCBI Taxonomy" id="207559"/>
    <lineage>
        <taxon>Bacteria</taxon>
        <taxon>Pseudomonadati</taxon>
        <taxon>Thermodesulfobacteriota</taxon>
        <taxon>Desulfovibrionia</taxon>
        <taxon>Desulfovibrionales</taxon>
        <taxon>Desulfovibrionaceae</taxon>
        <taxon>Oleidesulfovibrio</taxon>
    </lineage>
</organism>
<name>PANB_OLEA2</name>
<evidence type="ECO:0000255" key="1">
    <source>
        <dbReference type="HAMAP-Rule" id="MF_00156"/>
    </source>
</evidence>
<evidence type="ECO:0000256" key="2">
    <source>
        <dbReference type="SAM" id="MobiDB-lite"/>
    </source>
</evidence>
<keyword id="KW-0963">Cytoplasm</keyword>
<keyword id="KW-0460">Magnesium</keyword>
<keyword id="KW-0479">Metal-binding</keyword>
<keyword id="KW-0566">Pantothenate biosynthesis</keyword>
<keyword id="KW-1185">Reference proteome</keyword>
<keyword id="KW-0808">Transferase</keyword>
<reference key="1">
    <citation type="journal article" date="2011" name="J. Bacteriol.">
        <title>Complete genome sequence and updated annotation of Desulfovibrio alaskensis G20.</title>
        <authorList>
            <person name="Hauser L.J."/>
            <person name="Land M.L."/>
            <person name="Brown S.D."/>
            <person name="Larimer F."/>
            <person name="Keller K.L."/>
            <person name="Rapp-Giles B.J."/>
            <person name="Price M.N."/>
            <person name="Lin M."/>
            <person name="Bruce D.C."/>
            <person name="Detter J.C."/>
            <person name="Tapia R."/>
            <person name="Han C.S."/>
            <person name="Goodwin L.A."/>
            <person name="Cheng J.F."/>
            <person name="Pitluck S."/>
            <person name="Copeland A."/>
            <person name="Lucas S."/>
            <person name="Nolan M."/>
            <person name="Lapidus A.L."/>
            <person name="Palumbo A.V."/>
            <person name="Wall J.D."/>
        </authorList>
    </citation>
    <scope>NUCLEOTIDE SEQUENCE [LARGE SCALE GENOMIC DNA]</scope>
    <source>
        <strain>ATCC BAA-1058 / DSM 17464 / G20</strain>
    </source>
</reference>